<sequence length="692" mass="78033">MNKKLEQLEKFKTNDKNPVYSTTNTGVSLSDDANSLKAGPRGPTLLEDFVLREKITHFDHERIPERIVHARGTGAHGYFLSYKDHSKLTKADFLSKQDKKTPVFIRISTVQGPRGSADTVRDVHGFAVKFYTDEGNYDLVGNNMPVFFIQDASSFPDFVHAVKMEPQNEMPTGGSAHDTFYDFCGLKPESAHSVLWVMSDRGIPISLRHQQGFGVHSYRFINQEGKSTFVKLHWKPLSGTCSLLWDEAQKIAGKDCDYHRRRFWEDIESGDFPQWELGAQLLDEDLQKKFDFDILDPTKLIPEELTPVIPLGRMVIDRNPDNFFAETEQVAFCVSHVVPGIDFSNDPLLQGRIFSYLDTQLSRLGGPNFNEIPINRPVCPFANNQRDGIHRMTINKGGASYFPNSIDKGYPLLKEPSANKGGFRPYPENISGTKSYDRSETFEDHFSQATMFWNSMSQHEKNHIIAAYTFEISKCSRPEVRTRYVNNILVNIDSVLAEKVAKNLGVKIEPTSTKPIKKIMVKPSPALSQPNLLSGDIVSRRISVIIEKGVDYDDVINFKDDMEKRGAMVMLVSSTLAQVECSGGEMLSPKGTIIGNPSIFFDAVYVPKSTEEATKILSDDGNFLHYILEAFKHLKTIAFGGSVSVIKELLRLPQDHGLLLGNGYKDITEQFFYSLAHHRVWERESKVSKIPA</sequence>
<proteinExistence type="evidence at protein level"/>
<name>CATB_DICDI</name>
<organism>
    <name type="scientific">Dictyostelium discoideum</name>
    <name type="common">Social amoeba</name>
    <dbReference type="NCBI Taxonomy" id="44689"/>
    <lineage>
        <taxon>Eukaryota</taxon>
        <taxon>Amoebozoa</taxon>
        <taxon>Evosea</taxon>
        <taxon>Eumycetozoa</taxon>
        <taxon>Dictyostelia</taxon>
        <taxon>Dictyosteliales</taxon>
        <taxon>Dictyosteliaceae</taxon>
        <taxon>Dictyostelium</taxon>
    </lineage>
</organism>
<dbReference type="EC" id="1.11.1.6"/>
<dbReference type="EMBL" id="AY386221">
    <property type="protein sequence ID" value="AAQ94087.1"/>
    <property type="status" value="ALT_INIT"/>
    <property type="molecule type" value="Genomic_DNA"/>
</dbReference>
<dbReference type="EMBL" id="AAFI02000005">
    <property type="protein sequence ID" value="EAL71903.1"/>
    <property type="molecule type" value="Genomic_DNA"/>
</dbReference>
<dbReference type="EMBL" id="AF183177">
    <property type="protein sequence ID" value="AAD55449.1"/>
    <property type="molecule type" value="mRNA"/>
</dbReference>
<dbReference type="RefSeq" id="XP_646153.1">
    <property type="nucleotide sequence ID" value="XM_641061.1"/>
</dbReference>
<dbReference type="SMR" id="Q55DH8"/>
<dbReference type="FunCoup" id="Q55DH8">
    <property type="interactions" value="276"/>
</dbReference>
<dbReference type="STRING" id="44689.Q55DH8"/>
<dbReference type="PeroxiBase" id="4098">
    <property type="entry name" value="DdKat02"/>
</dbReference>
<dbReference type="PaxDb" id="44689-DDB0191496"/>
<dbReference type="EnsemblProtists" id="EAL71903">
    <property type="protein sequence ID" value="EAL71903"/>
    <property type="gene ID" value="DDB_G0269108"/>
</dbReference>
<dbReference type="GeneID" id="8617104"/>
<dbReference type="KEGG" id="ddi:DDB_G0269108"/>
<dbReference type="dictyBase" id="DDB_G0269108">
    <property type="gene designation" value="catB"/>
</dbReference>
<dbReference type="VEuPathDB" id="AmoebaDB:DDB_G0269108"/>
<dbReference type="eggNOG" id="KOG0047">
    <property type="taxonomic scope" value="Eukaryota"/>
</dbReference>
<dbReference type="HOGENOM" id="CLU_010645_3_0_1"/>
<dbReference type="InParanoid" id="Q55DH8"/>
<dbReference type="OMA" id="WQMSDRA"/>
<dbReference type="PhylomeDB" id="Q55DH8"/>
<dbReference type="PRO" id="PR:Q55DH8"/>
<dbReference type="Proteomes" id="UP000002195">
    <property type="component" value="Chromosome 1"/>
</dbReference>
<dbReference type="GO" id="GO:0005829">
    <property type="term" value="C:cytosol"/>
    <property type="evidence" value="ECO:0000314"/>
    <property type="project" value="dictyBase"/>
</dbReference>
<dbReference type="GO" id="GO:0004096">
    <property type="term" value="F:catalase activity"/>
    <property type="evidence" value="ECO:0000314"/>
    <property type="project" value="dictyBase"/>
</dbReference>
<dbReference type="GO" id="GO:0020037">
    <property type="term" value="F:heme binding"/>
    <property type="evidence" value="ECO:0000318"/>
    <property type="project" value="GO_Central"/>
</dbReference>
<dbReference type="GO" id="GO:0046872">
    <property type="term" value="F:metal ion binding"/>
    <property type="evidence" value="ECO:0007669"/>
    <property type="project" value="UniProtKB-KW"/>
</dbReference>
<dbReference type="GO" id="GO:0042744">
    <property type="term" value="P:hydrogen peroxide catabolic process"/>
    <property type="evidence" value="ECO:0000314"/>
    <property type="project" value="dictyBase"/>
</dbReference>
<dbReference type="GO" id="GO:0006979">
    <property type="term" value="P:response to oxidative stress"/>
    <property type="evidence" value="ECO:0000318"/>
    <property type="project" value="GO_Central"/>
</dbReference>
<dbReference type="GO" id="GO:0000302">
    <property type="term" value="P:response to reactive oxygen species"/>
    <property type="evidence" value="ECO:0000315"/>
    <property type="project" value="dictyBase"/>
</dbReference>
<dbReference type="GO" id="GO:0030587">
    <property type="term" value="P:sorocarp development"/>
    <property type="evidence" value="ECO:0000315"/>
    <property type="project" value="dictyBase"/>
</dbReference>
<dbReference type="CDD" id="cd08155">
    <property type="entry name" value="catalase_clade_2"/>
    <property type="match status" value="1"/>
</dbReference>
<dbReference type="CDD" id="cd03132">
    <property type="entry name" value="GATase1_catalase"/>
    <property type="match status" value="1"/>
</dbReference>
<dbReference type="FunFam" id="2.40.180.10:FF:000003">
    <property type="entry name" value="Catalase"/>
    <property type="match status" value="1"/>
</dbReference>
<dbReference type="FunFam" id="3.40.50.880:FF:000110">
    <property type="entry name" value="Catalase"/>
    <property type="match status" value="1"/>
</dbReference>
<dbReference type="Gene3D" id="1.20.1370.20">
    <property type="match status" value="1"/>
</dbReference>
<dbReference type="Gene3D" id="3.40.50.880">
    <property type="match status" value="1"/>
</dbReference>
<dbReference type="Gene3D" id="2.40.180.10">
    <property type="entry name" value="Catalase core domain"/>
    <property type="match status" value="1"/>
</dbReference>
<dbReference type="InterPro" id="IPR018028">
    <property type="entry name" value="Catalase"/>
</dbReference>
<dbReference type="InterPro" id="IPR024708">
    <property type="entry name" value="Catalase_AS"/>
</dbReference>
<dbReference type="InterPro" id="IPR024712">
    <property type="entry name" value="Catalase_clade2"/>
</dbReference>
<dbReference type="InterPro" id="IPR043156">
    <property type="entry name" value="Catalase_clade2_helical"/>
</dbReference>
<dbReference type="InterPro" id="IPR011614">
    <property type="entry name" value="Catalase_core"/>
</dbReference>
<dbReference type="InterPro" id="IPR002226">
    <property type="entry name" value="Catalase_haem_BS"/>
</dbReference>
<dbReference type="InterPro" id="IPR010582">
    <property type="entry name" value="Catalase_immune_responsive"/>
</dbReference>
<dbReference type="InterPro" id="IPR041399">
    <property type="entry name" value="Catalase_large_C"/>
</dbReference>
<dbReference type="InterPro" id="IPR020835">
    <property type="entry name" value="Catalase_sf"/>
</dbReference>
<dbReference type="InterPro" id="IPR029062">
    <property type="entry name" value="Class_I_gatase-like"/>
</dbReference>
<dbReference type="PANTHER" id="PTHR42821">
    <property type="entry name" value="CATALASE"/>
    <property type="match status" value="1"/>
</dbReference>
<dbReference type="PANTHER" id="PTHR42821:SF1">
    <property type="entry name" value="CATALASE-B"/>
    <property type="match status" value="1"/>
</dbReference>
<dbReference type="Pfam" id="PF00199">
    <property type="entry name" value="Catalase"/>
    <property type="match status" value="1"/>
</dbReference>
<dbReference type="Pfam" id="PF06628">
    <property type="entry name" value="Catalase-rel"/>
    <property type="match status" value="1"/>
</dbReference>
<dbReference type="Pfam" id="PF18011">
    <property type="entry name" value="Catalase_C"/>
    <property type="match status" value="1"/>
</dbReference>
<dbReference type="PIRSF" id="PIRSF038927">
    <property type="entry name" value="Catalase_clade2"/>
    <property type="match status" value="1"/>
</dbReference>
<dbReference type="PRINTS" id="PR00067">
    <property type="entry name" value="CATALASE"/>
</dbReference>
<dbReference type="SMART" id="SM01060">
    <property type="entry name" value="Catalase"/>
    <property type="match status" value="1"/>
</dbReference>
<dbReference type="SUPFAM" id="SSF52317">
    <property type="entry name" value="Class I glutamine amidotransferase-like"/>
    <property type="match status" value="1"/>
</dbReference>
<dbReference type="SUPFAM" id="SSF56634">
    <property type="entry name" value="Heme-dependent catalase-like"/>
    <property type="match status" value="1"/>
</dbReference>
<dbReference type="PROSITE" id="PS00437">
    <property type="entry name" value="CATALASE_1"/>
    <property type="match status" value="1"/>
</dbReference>
<dbReference type="PROSITE" id="PS00438">
    <property type="entry name" value="CATALASE_2"/>
    <property type="match status" value="1"/>
</dbReference>
<dbReference type="PROSITE" id="PS51402">
    <property type="entry name" value="CATALASE_3"/>
    <property type="match status" value="1"/>
</dbReference>
<evidence type="ECO:0000250" key="1"/>
<evidence type="ECO:0000255" key="2">
    <source>
        <dbReference type="PROSITE-ProRule" id="PRU10013"/>
    </source>
</evidence>
<evidence type="ECO:0000269" key="3">
    <source>
    </source>
</evidence>
<evidence type="ECO:0000269" key="4">
    <source>
    </source>
</evidence>
<evidence type="ECO:0000269" key="5">
    <source>
    </source>
</evidence>
<evidence type="ECO:0000269" key="6">
    <source>
    </source>
</evidence>
<evidence type="ECO:0000305" key="7"/>
<protein>
    <recommendedName>
        <fullName>Catalase-B</fullName>
        <ecNumber>1.11.1.6</ecNumber>
    </recommendedName>
</protein>
<feature type="chain" id="PRO_0000328239" description="Catalase-B">
    <location>
        <begin position="1"/>
        <end position="692"/>
    </location>
</feature>
<feature type="active site" evidence="2">
    <location>
        <position position="69"/>
    </location>
</feature>
<feature type="active site" evidence="2">
    <location>
        <position position="142"/>
    </location>
</feature>
<feature type="binding site" description="axial binding residue" evidence="1">
    <location>
        <position position="356"/>
    </location>
    <ligand>
        <name>heme</name>
        <dbReference type="ChEBI" id="CHEBI:30413"/>
    </ligand>
    <ligandPart>
        <name>Fe</name>
        <dbReference type="ChEBI" id="CHEBI:18248"/>
    </ligandPart>
</feature>
<accession>Q55DH8</accession>
<accession>Q6TWC1</accession>
<accession>Q9U6L8</accession>
<gene>
    <name type="primary">catB</name>
    <name type="ORF">DDB_G0269108</name>
</gene>
<reference key="1">
    <citation type="journal article" date="2004" name="Eukaryot. Cell">
        <title>Identification of genes dependent on the MADS box transcription factor SrfA in Dictyostelium discoideum development.</title>
        <authorList>
            <person name="Escalante R."/>
            <person name="Iranfar N."/>
            <person name="Sastre L."/>
            <person name="Loomis W.F."/>
        </authorList>
    </citation>
    <scope>NUCLEOTIDE SEQUENCE [GENOMIC DNA]</scope>
    <scope>INDUCTION BY SRFA</scope>
    <source>
        <strain>AX4</strain>
    </source>
</reference>
<reference key="2">
    <citation type="journal article" date="2005" name="Nature">
        <title>The genome of the social amoeba Dictyostelium discoideum.</title>
        <authorList>
            <person name="Eichinger L."/>
            <person name="Pachebat J.A."/>
            <person name="Gloeckner G."/>
            <person name="Rajandream M.A."/>
            <person name="Sucgang R."/>
            <person name="Berriman M."/>
            <person name="Song J."/>
            <person name="Olsen R."/>
            <person name="Szafranski K."/>
            <person name="Xu Q."/>
            <person name="Tunggal B."/>
            <person name="Kummerfeld S."/>
            <person name="Madera M."/>
            <person name="Konfortov B.A."/>
            <person name="Rivero F."/>
            <person name="Bankier A.T."/>
            <person name="Lehmann R."/>
            <person name="Hamlin N."/>
            <person name="Davies R."/>
            <person name="Gaudet P."/>
            <person name="Fey P."/>
            <person name="Pilcher K."/>
            <person name="Chen G."/>
            <person name="Saunders D."/>
            <person name="Sodergren E.J."/>
            <person name="Davis P."/>
            <person name="Kerhornou A."/>
            <person name="Nie X."/>
            <person name="Hall N."/>
            <person name="Anjard C."/>
            <person name="Hemphill L."/>
            <person name="Bason N."/>
            <person name="Farbrother P."/>
            <person name="Desany B."/>
            <person name="Just E."/>
            <person name="Morio T."/>
            <person name="Rost R."/>
            <person name="Churcher C.M."/>
            <person name="Cooper J."/>
            <person name="Haydock S."/>
            <person name="van Driessche N."/>
            <person name="Cronin A."/>
            <person name="Goodhead I."/>
            <person name="Muzny D.M."/>
            <person name="Mourier T."/>
            <person name="Pain A."/>
            <person name="Lu M."/>
            <person name="Harper D."/>
            <person name="Lindsay R."/>
            <person name="Hauser H."/>
            <person name="James K.D."/>
            <person name="Quiles M."/>
            <person name="Madan Babu M."/>
            <person name="Saito T."/>
            <person name="Buchrieser C."/>
            <person name="Wardroper A."/>
            <person name="Felder M."/>
            <person name="Thangavelu M."/>
            <person name="Johnson D."/>
            <person name="Knights A."/>
            <person name="Loulseged H."/>
            <person name="Mungall K.L."/>
            <person name="Oliver K."/>
            <person name="Price C."/>
            <person name="Quail M.A."/>
            <person name="Urushihara H."/>
            <person name="Hernandez J."/>
            <person name="Rabbinowitsch E."/>
            <person name="Steffen D."/>
            <person name="Sanders M."/>
            <person name="Ma J."/>
            <person name="Kohara Y."/>
            <person name="Sharp S."/>
            <person name="Simmonds M.N."/>
            <person name="Spiegler S."/>
            <person name="Tivey A."/>
            <person name="Sugano S."/>
            <person name="White B."/>
            <person name="Walker D."/>
            <person name="Woodward J.R."/>
            <person name="Winckler T."/>
            <person name="Tanaka Y."/>
            <person name="Shaulsky G."/>
            <person name="Schleicher M."/>
            <person name="Weinstock G.M."/>
            <person name="Rosenthal A."/>
            <person name="Cox E.C."/>
            <person name="Chisholm R.L."/>
            <person name="Gibbs R.A."/>
            <person name="Loomis W.F."/>
            <person name="Platzer M."/>
            <person name="Kay R.R."/>
            <person name="Williams J.G."/>
            <person name="Dear P.H."/>
            <person name="Noegel A.A."/>
            <person name="Barrell B.G."/>
            <person name="Kuspa A."/>
        </authorList>
    </citation>
    <scope>NUCLEOTIDE SEQUENCE [LARGE SCALE GENOMIC DNA]</scope>
    <source>
        <strain>AX4</strain>
    </source>
</reference>
<reference key="3">
    <citation type="journal article" date="2000" name="Biochim. Biophys. Acta">
        <title>Differential developmental expression and cell type specificity of Dictyostelium catalases and their response to oxidative stress and UV-light.</title>
        <authorList>
            <person name="Garcia M.X.U."/>
            <person name="Foote C."/>
            <person name="van Es S."/>
            <person name="Devreotes P.N."/>
            <person name="Alexander S."/>
            <person name="Alexander H."/>
        </authorList>
    </citation>
    <scope>NUCLEOTIDE SEQUENCE [MRNA] OF 166-692</scope>
    <scope>CATALYTIC ACTIVITY</scope>
    <scope>SUBCELLULAR LOCATION</scope>
    <scope>DEVELOPMENTAL STAGE</scope>
    <source>
        <strain>AX3-1</strain>
    </source>
</reference>
<reference key="4">
    <citation type="journal article" date="2001" name="Mol. Biol. Cell">
        <title>Expression patterns of cell-type-specific genes in Dictyostelium.</title>
        <authorList>
            <person name="Iranfar N."/>
            <person name="Fuller D."/>
            <person name="Sasik R."/>
            <person name="Hwa T."/>
            <person name="Laub M."/>
            <person name="Loomis W.F."/>
        </authorList>
    </citation>
    <scope>DEVELOPMENTAL STAGE</scope>
    <source>
        <strain>NC-4</strain>
    </source>
</reference>
<reference key="5">
    <citation type="journal article" date="2003" name="Biochim. Biophys. Acta">
        <title>The Dictyostelium discoideum prespore-specific catalase B functions to control late development and to protect spore viability.</title>
        <authorList>
            <person name="Garcia M.X.U."/>
            <person name="Alexander H."/>
            <person name="Mahadeo D."/>
            <person name="Cotter D.A."/>
            <person name="Alexander S."/>
        </authorList>
    </citation>
    <scope>FUNCTION</scope>
    <source>
        <strain>AX4</strain>
    </source>
</reference>
<comment type="function">
    <text evidence="5">Occurs in almost all aerobically respiring organisms and serves to protect cells from the toxic effects of hydrogen peroxide. Its accumulation in prespore cells affords the spores protection from oxidation during prolonged dormancy. Required for normal developmental timing, possibly through a regulatory role in differentiation and morphogenesis.</text>
</comment>
<comment type="catalytic activity">
    <reaction evidence="2 3">
        <text>2 H2O2 = O2 + 2 H2O</text>
        <dbReference type="Rhea" id="RHEA:20309"/>
        <dbReference type="ChEBI" id="CHEBI:15377"/>
        <dbReference type="ChEBI" id="CHEBI:15379"/>
        <dbReference type="ChEBI" id="CHEBI:16240"/>
        <dbReference type="EC" id="1.11.1.6"/>
    </reaction>
</comment>
<comment type="cofactor">
    <cofactor evidence="1">
        <name>heme</name>
        <dbReference type="ChEBI" id="CHEBI:30413"/>
    </cofactor>
</comment>
<comment type="biophysicochemical properties">
    <temperatureDependence>
        <text>Thermostable. Still active after heating at 65 degrees Celsius for 15 minures.</text>
    </temperatureDependence>
</comment>
<comment type="subcellular location">
    <subcellularLocation>
        <location evidence="3">Cytoplasm</location>
    </subcellularLocation>
</comment>
<comment type="developmental stage">
    <text evidence="3 4">Expressed initially during formation of apical tips in aggregates, accumulates rapidly during terminal cell differentiation, and peaks at about 21 hours. Expressed only in prespore cells.</text>
</comment>
<comment type="induction">
    <text evidence="6">By srfA, in response to late development signals.</text>
</comment>
<comment type="similarity">
    <text evidence="7">Belongs to the catalase family.</text>
</comment>
<comment type="sequence caution" evidence="7">
    <conflict type="erroneous initiation">
        <sequence resource="EMBL-CDS" id="AAQ94087"/>
    </conflict>
</comment>
<keyword id="KW-0963">Cytoplasm</keyword>
<keyword id="KW-0349">Heme</keyword>
<keyword id="KW-0376">Hydrogen peroxide</keyword>
<keyword id="KW-0408">Iron</keyword>
<keyword id="KW-0479">Metal-binding</keyword>
<keyword id="KW-0560">Oxidoreductase</keyword>
<keyword id="KW-0575">Peroxidase</keyword>
<keyword id="KW-1185">Reference proteome</keyword>